<organism>
    <name type="scientific">Thermodesulfovibrio yellowstonii (strain ATCC 51303 / DSM 11347 / YP87)</name>
    <dbReference type="NCBI Taxonomy" id="289376"/>
    <lineage>
        <taxon>Bacteria</taxon>
        <taxon>Pseudomonadati</taxon>
        <taxon>Nitrospirota</taxon>
        <taxon>Thermodesulfovibrionia</taxon>
        <taxon>Thermodesulfovibrionales</taxon>
        <taxon>Thermodesulfovibrionaceae</taxon>
        <taxon>Thermodesulfovibrio</taxon>
    </lineage>
</organism>
<proteinExistence type="inferred from homology"/>
<dbReference type="EMBL" id="CP001147">
    <property type="protein sequence ID" value="ACI20719.1"/>
    <property type="molecule type" value="Genomic_DNA"/>
</dbReference>
<dbReference type="RefSeq" id="WP_012545453.1">
    <property type="nucleotide sequence ID" value="NC_011296.1"/>
</dbReference>
<dbReference type="RefSeq" id="YP_002249045.1">
    <property type="nucleotide sequence ID" value="NC_011296.1"/>
</dbReference>
<dbReference type="SMR" id="B5YLD0"/>
<dbReference type="FunCoup" id="B5YLD0">
    <property type="interactions" value="332"/>
</dbReference>
<dbReference type="STRING" id="289376.THEYE_A1227"/>
<dbReference type="EnsemblBacteria" id="ACI20719">
    <property type="protein sequence ID" value="ACI20719"/>
    <property type="gene ID" value="THEYE_A1227"/>
</dbReference>
<dbReference type="KEGG" id="tye:THEYE_A1227"/>
<dbReference type="PATRIC" id="fig|289376.4.peg.1200"/>
<dbReference type="eggNOG" id="COG0291">
    <property type="taxonomic scope" value="Bacteria"/>
</dbReference>
<dbReference type="HOGENOM" id="CLU_169643_4_3_0"/>
<dbReference type="InParanoid" id="B5YLD0"/>
<dbReference type="OrthoDB" id="47476at2"/>
<dbReference type="Proteomes" id="UP000000718">
    <property type="component" value="Chromosome"/>
</dbReference>
<dbReference type="GO" id="GO:0022625">
    <property type="term" value="C:cytosolic large ribosomal subunit"/>
    <property type="evidence" value="ECO:0000318"/>
    <property type="project" value="GO_Central"/>
</dbReference>
<dbReference type="GO" id="GO:0003735">
    <property type="term" value="F:structural constituent of ribosome"/>
    <property type="evidence" value="ECO:0000318"/>
    <property type="project" value="GO_Central"/>
</dbReference>
<dbReference type="GO" id="GO:0006412">
    <property type="term" value="P:translation"/>
    <property type="evidence" value="ECO:0007669"/>
    <property type="project" value="UniProtKB-UniRule"/>
</dbReference>
<dbReference type="FunFam" id="4.10.410.60:FF:000001">
    <property type="entry name" value="50S ribosomal protein L35"/>
    <property type="match status" value="1"/>
</dbReference>
<dbReference type="Gene3D" id="4.10.410.60">
    <property type="match status" value="1"/>
</dbReference>
<dbReference type="HAMAP" id="MF_00514">
    <property type="entry name" value="Ribosomal_bL35"/>
    <property type="match status" value="1"/>
</dbReference>
<dbReference type="InterPro" id="IPR001706">
    <property type="entry name" value="Ribosomal_bL35"/>
</dbReference>
<dbReference type="InterPro" id="IPR021137">
    <property type="entry name" value="Ribosomal_bL35-like"/>
</dbReference>
<dbReference type="InterPro" id="IPR018265">
    <property type="entry name" value="Ribosomal_bL35_CS"/>
</dbReference>
<dbReference type="InterPro" id="IPR037229">
    <property type="entry name" value="Ribosomal_bL35_sf"/>
</dbReference>
<dbReference type="NCBIfam" id="TIGR00001">
    <property type="entry name" value="rpmI_bact"/>
    <property type="match status" value="1"/>
</dbReference>
<dbReference type="PANTHER" id="PTHR33343">
    <property type="entry name" value="54S RIBOSOMAL PROTEIN BL35M"/>
    <property type="match status" value="1"/>
</dbReference>
<dbReference type="PANTHER" id="PTHR33343:SF1">
    <property type="entry name" value="LARGE RIBOSOMAL SUBUNIT PROTEIN BL35M"/>
    <property type="match status" value="1"/>
</dbReference>
<dbReference type="Pfam" id="PF01632">
    <property type="entry name" value="Ribosomal_L35p"/>
    <property type="match status" value="1"/>
</dbReference>
<dbReference type="PRINTS" id="PR00064">
    <property type="entry name" value="RIBOSOMALL35"/>
</dbReference>
<dbReference type="SUPFAM" id="SSF143034">
    <property type="entry name" value="L35p-like"/>
    <property type="match status" value="1"/>
</dbReference>
<dbReference type="PROSITE" id="PS00936">
    <property type="entry name" value="RIBOSOMAL_L35"/>
    <property type="match status" value="1"/>
</dbReference>
<reference key="1">
    <citation type="submission" date="2008-08" db="EMBL/GenBank/DDBJ databases">
        <title>The complete genome sequence of Thermodesulfovibrio yellowstonii strain ATCC 51303 / DSM 11347 / YP87.</title>
        <authorList>
            <person name="Dodson R.J."/>
            <person name="Durkin A.S."/>
            <person name="Wu M."/>
            <person name="Eisen J."/>
            <person name="Sutton G."/>
        </authorList>
    </citation>
    <scope>NUCLEOTIDE SEQUENCE [LARGE SCALE GENOMIC DNA]</scope>
    <source>
        <strain>ATCC 51303 / DSM 11347 / YP87</strain>
    </source>
</reference>
<sequence length="66" mass="7746">MPKLKTHRGAAKRFKVTGTGKIMRRRANKSHLLTGKPSKRTRHLRQIAQVDETQYKAIRMLIPYKF</sequence>
<gene>
    <name evidence="1" type="primary">rpmI</name>
    <name type="ordered locus">THEYE_A1227</name>
</gene>
<feature type="chain" id="PRO_1000127422" description="Large ribosomal subunit protein bL35">
    <location>
        <begin position="1"/>
        <end position="66"/>
    </location>
</feature>
<comment type="similarity">
    <text evidence="1">Belongs to the bacterial ribosomal protein bL35 family.</text>
</comment>
<protein>
    <recommendedName>
        <fullName evidence="1">Large ribosomal subunit protein bL35</fullName>
    </recommendedName>
    <alternativeName>
        <fullName evidence="2">50S ribosomal protein L35</fullName>
    </alternativeName>
</protein>
<keyword id="KW-1185">Reference proteome</keyword>
<keyword id="KW-0687">Ribonucleoprotein</keyword>
<keyword id="KW-0689">Ribosomal protein</keyword>
<accession>B5YLD0</accession>
<evidence type="ECO:0000255" key="1">
    <source>
        <dbReference type="HAMAP-Rule" id="MF_00514"/>
    </source>
</evidence>
<evidence type="ECO:0000305" key="2"/>
<name>RL35_THEYD</name>